<accession>Q9ESD1</accession>
<feature type="signal peptide" evidence="2">
    <location>
        <begin position="1"/>
        <end position="29"/>
    </location>
</feature>
<feature type="propeptide" id="PRO_0000028031" description="Activation peptide" evidence="1">
    <location>
        <begin position="30"/>
        <end position="32"/>
    </location>
</feature>
<feature type="chain" id="PRO_0000240512" description="Prostasin">
    <location>
        <begin position="33"/>
        <end position="322"/>
    </location>
</feature>
<feature type="chain" id="PRO_0000028032" description="Prostasin light chain">
    <location>
        <begin position="33"/>
        <end position="44"/>
    </location>
</feature>
<feature type="chain" id="PRO_0000028033" description="Prostasin heavy chain">
    <location>
        <begin position="45"/>
        <end position="322"/>
    </location>
</feature>
<feature type="propeptide" id="PRO_0000028034" evidence="1">
    <location>
        <begin position="323"/>
        <end position="342"/>
    </location>
</feature>
<feature type="transmembrane region" description="Helical" evidence="2">
    <location>
        <begin position="320"/>
        <end position="340"/>
    </location>
</feature>
<feature type="domain" description="Peptidase S1" evidence="3">
    <location>
        <begin position="45"/>
        <end position="286"/>
    </location>
</feature>
<feature type="active site" description="Charge relay system" evidence="1">
    <location>
        <position position="85"/>
    </location>
</feature>
<feature type="active site" description="Charge relay system" evidence="1">
    <location>
        <position position="134"/>
    </location>
</feature>
<feature type="active site" description="Charge relay system" evidence="1">
    <location>
        <position position="238"/>
    </location>
</feature>
<feature type="glycosylation site" description="N-linked (GlcNAc...) asparagine" evidence="2">
    <location>
        <position position="110"/>
    </location>
</feature>
<feature type="glycosylation site" description="N-linked (GlcNAc...) asparagine" evidence="2">
    <location>
        <position position="159"/>
    </location>
</feature>
<feature type="disulfide bond" description="Interchain (between light and heavy chains)" evidence="3">
    <location>
        <begin position="37"/>
        <end position="154"/>
    </location>
</feature>
<feature type="disulfide bond" evidence="3">
    <location>
        <begin position="70"/>
        <end position="86"/>
    </location>
</feature>
<feature type="disulfide bond" evidence="3">
    <location>
        <begin position="168"/>
        <end position="244"/>
    </location>
</feature>
<feature type="disulfide bond" evidence="3">
    <location>
        <begin position="201"/>
        <end position="223"/>
    </location>
</feature>
<feature type="disulfide bond" evidence="3">
    <location>
        <begin position="234"/>
        <end position="262"/>
    </location>
</feature>
<proteinExistence type="evidence at transcript level"/>
<protein>
    <recommendedName>
        <fullName>Prostasin</fullName>
        <ecNumber>3.4.21.-</ecNumber>
    </recommendedName>
    <alternativeName>
        <fullName>Channel-activating protease 1</fullName>
        <shortName>CAP1</shortName>
    </alternativeName>
    <alternativeName>
        <fullName>Serine protease 8</fullName>
    </alternativeName>
    <component>
        <recommendedName>
            <fullName>Prostasin light chain</fullName>
        </recommendedName>
    </component>
    <component>
        <recommendedName>
            <fullName>Prostasin heavy chain</fullName>
        </recommendedName>
    </component>
</protein>
<name>PRSS8_MOUSE</name>
<organism>
    <name type="scientific">Mus musculus</name>
    <name type="common">Mouse</name>
    <dbReference type="NCBI Taxonomy" id="10090"/>
    <lineage>
        <taxon>Eukaryota</taxon>
        <taxon>Metazoa</taxon>
        <taxon>Chordata</taxon>
        <taxon>Craniata</taxon>
        <taxon>Vertebrata</taxon>
        <taxon>Euteleostomi</taxon>
        <taxon>Mammalia</taxon>
        <taxon>Eutheria</taxon>
        <taxon>Euarchontoglires</taxon>
        <taxon>Glires</taxon>
        <taxon>Rodentia</taxon>
        <taxon>Myomorpha</taxon>
        <taxon>Muroidea</taxon>
        <taxon>Muridae</taxon>
        <taxon>Murinae</taxon>
        <taxon>Mus</taxon>
        <taxon>Mus</taxon>
    </lineage>
</organism>
<dbReference type="EC" id="3.4.21.-"/>
<dbReference type="EMBL" id="AF188613">
    <property type="protein sequence ID" value="AAG17054.1"/>
    <property type="status" value="ALT_FRAME"/>
    <property type="molecule type" value="mRNA"/>
</dbReference>
<dbReference type="SMR" id="Q9ESD1"/>
<dbReference type="FunCoup" id="Q9ESD1">
    <property type="interactions" value="88"/>
</dbReference>
<dbReference type="STRING" id="10090.ENSMUSP00000032988"/>
<dbReference type="MEROPS" id="S01.159"/>
<dbReference type="GlyCosmos" id="Q9ESD1">
    <property type="glycosylation" value="2 sites, No reported glycans"/>
</dbReference>
<dbReference type="GlyGen" id="Q9ESD1">
    <property type="glycosylation" value="2 sites"/>
</dbReference>
<dbReference type="PhosphoSitePlus" id="Q9ESD1"/>
<dbReference type="PaxDb" id="10090-ENSMUSP00000032988"/>
<dbReference type="ProteomicsDB" id="291824"/>
<dbReference type="AGR" id="MGI:1923810"/>
<dbReference type="MGI" id="MGI:1923810">
    <property type="gene designation" value="Prss8"/>
</dbReference>
<dbReference type="eggNOG" id="KOG3627">
    <property type="taxonomic scope" value="Eukaryota"/>
</dbReference>
<dbReference type="InParanoid" id="Q9ESD1"/>
<dbReference type="PhylomeDB" id="Q9ESD1"/>
<dbReference type="BRENDA" id="3.4.21.B6">
    <property type="organism ID" value="3474"/>
</dbReference>
<dbReference type="ChiTaRS" id="Prss8">
    <property type="organism name" value="mouse"/>
</dbReference>
<dbReference type="PRO" id="PR:Q9ESD1"/>
<dbReference type="Proteomes" id="UP000000589">
    <property type="component" value="Unplaced"/>
</dbReference>
<dbReference type="RNAct" id="Q9ESD1">
    <property type="molecule type" value="protein"/>
</dbReference>
<dbReference type="GO" id="GO:0009897">
    <property type="term" value="C:external side of plasma membrane"/>
    <property type="evidence" value="ECO:0000314"/>
    <property type="project" value="UniProtKB"/>
</dbReference>
<dbReference type="GO" id="GO:0005576">
    <property type="term" value="C:extracellular region"/>
    <property type="evidence" value="ECO:0007669"/>
    <property type="project" value="UniProtKB-SubCell"/>
</dbReference>
<dbReference type="GO" id="GO:0045121">
    <property type="term" value="C:membrane raft"/>
    <property type="evidence" value="ECO:0000314"/>
    <property type="project" value="UniProtKB"/>
</dbReference>
<dbReference type="GO" id="GO:0004252">
    <property type="term" value="F:serine-type endopeptidase activity"/>
    <property type="evidence" value="ECO:0007669"/>
    <property type="project" value="InterPro"/>
</dbReference>
<dbReference type="GO" id="GO:0017080">
    <property type="term" value="F:sodium channel regulator activity"/>
    <property type="evidence" value="ECO:0000315"/>
    <property type="project" value="UniProtKB"/>
</dbReference>
<dbReference type="GO" id="GO:0010765">
    <property type="term" value="P:positive regulation of sodium ion transport"/>
    <property type="evidence" value="ECO:0000316"/>
    <property type="project" value="MGI"/>
</dbReference>
<dbReference type="GO" id="GO:0006508">
    <property type="term" value="P:proteolysis"/>
    <property type="evidence" value="ECO:0007669"/>
    <property type="project" value="UniProtKB-KW"/>
</dbReference>
<dbReference type="GO" id="GO:0070633">
    <property type="term" value="P:transepithelial transport"/>
    <property type="evidence" value="ECO:0000315"/>
    <property type="project" value="UniProtKB"/>
</dbReference>
<dbReference type="CDD" id="cd00190">
    <property type="entry name" value="Tryp_SPc"/>
    <property type="match status" value="1"/>
</dbReference>
<dbReference type="FunFam" id="2.40.10.10:FF:000039">
    <property type="entry name" value="Brain-specific serine protease 4"/>
    <property type="match status" value="1"/>
</dbReference>
<dbReference type="Gene3D" id="2.40.10.10">
    <property type="entry name" value="Trypsin-like serine proteases"/>
    <property type="match status" value="2"/>
</dbReference>
<dbReference type="InterPro" id="IPR009003">
    <property type="entry name" value="Peptidase_S1_PA"/>
</dbReference>
<dbReference type="InterPro" id="IPR043504">
    <property type="entry name" value="Peptidase_S1_PA_chymotrypsin"/>
</dbReference>
<dbReference type="InterPro" id="IPR001314">
    <property type="entry name" value="Peptidase_S1A"/>
</dbReference>
<dbReference type="InterPro" id="IPR001254">
    <property type="entry name" value="Trypsin_dom"/>
</dbReference>
<dbReference type="InterPro" id="IPR018114">
    <property type="entry name" value="TRYPSIN_HIS"/>
</dbReference>
<dbReference type="InterPro" id="IPR033116">
    <property type="entry name" value="TRYPSIN_SER"/>
</dbReference>
<dbReference type="PANTHER" id="PTHR24253:SF169">
    <property type="entry name" value="PROSTASIN"/>
    <property type="match status" value="1"/>
</dbReference>
<dbReference type="PANTHER" id="PTHR24253">
    <property type="entry name" value="TRANSMEMBRANE PROTEASE SERINE"/>
    <property type="match status" value="1"/>
</dbReference>
<dbReference type="Pfam" id="PF00089">
    <property type="entry name" value="Trypsin"/>
    <property type="match status" value="1"/>
</dbReference>
<dbReference type="PRINTS" id="PR00722">
    <property type="entry name" value="CHYMOTRYPSIN"/>
</dbReference>
<dbReference type="SMART" id="SM00020">
    <property type="entry name" value="Tryp_SPc"/>
    <property type="match status" value="1"/>
</dbReference>
<dbReference type="SUPFAM" id="SSF50494">
    <property type="entry name" value="Trypsin-like serine proteases"/>
    <property type="match status" value="1"/>
</dbReference>
<dbReference type="PROSITE" id="PS50240">
    <property type="entry name" value="TRYPSIN_DOM"/>
    <property type="match status" value="1"/>
</dbReference>
<dbReference type="PROSITE" id="PS00134">
    <property type="entry name" value="TRYPSIN_HIS"/>
    <property type="match status" value="1"/>
</dbReference>
<dbReference type="PROSITE" id="PS00135">
    <property type="entry name" value="TRYPSIN_SER"/>
    <property type="match status" value="1"/>
</dbReference>
<comment type="function">
    <text evidence="1 4">Possesses a trypsin-like cleavage specificity with a preference for poly-basic substrates (By similarity). Stimulates epithelial sodium channel (ENaC) activity through activating cleavage of the gamma subunits (SCNN1G).</text>
</comment>
<comment type="subunit">
    <text evidence="1">Heterodimer of two chains, light and heavy, held by a disulfide bond.</text>
</comment>
<comment type="subcellular location">
    <subcellularLocation>
        <location evidence="1">Cell membrane</location>
        <topology evidence="1">Single-pass membrane protein</topology>
    </subcellularLocation>
</comment>
<comment type="subcellular location">
    <molecule>Prostasin</molecule>
    <subcellularLocation>
        <location evidence="1">Secreted</location>
        <location evidence="1">Extracellular space</location>
    </subcellularLocation>
</comment>
<comment type="subcellular location">
    <molecule>Prostasin light chain</molecule>
    <subcellularLocation>
        <location evidence="1">Secreted</location>
        <location evidence="1">Extracellular space</location>
    </subcellularLocation>
    <text evidence="1">Found in the seminal fluid. Secreted after cleavage of its C-terminus.</text>
</comment>
<comment type="subcellular location">
    <molecule>Prostasin heavy chain</molecule>
    <subcellularLocation>
        <location evidence="1">Secreted</location>
        <location evidence="1">Extracellular space</location>
    </subcellularLocation>
    <text evidence="1">Found in the seminal fluid. Secreted after cleavage of its C-terminus.</text>
</comment>
<comment type="similarity">
    <text evidence="3">Belongs to the peptidase S1 family.</text>
</comment>
<comment type="sequence caution" evidence="5">
    <conflict type="frameshift">
        <sequence resource="EMBL-CDS" id="AAG17054"/>
    </conflict>
</comment>
<gene>
    <name type="primary">Prss8</name>
    <name type="synonym">Cap1</name>
</gene>
<sequence length="342" mass="36729">MAPRVGLGLGQLEAVTILLLLGLLQSGIRADGTEASCGAVIQPRITGGGSAKPGQWPWQVSITYDGNHVCGGSLVSNKWVVSAAHCFPREHSREAYEVKLGAHQLDSYSNDTVVHTVAQIITHSSYREEGSQGDIAFIRLSSPVTFSRYIRPICLPAANASFPNGLHCTVTGWGHVAPSVSLQTPRPLQQLEVPLISRETCSCLYNINAVPEEPHTIQQDMLCAGYVKGGKDACQGDSGGPLSCPMEGIWYLAGIVSWGDACGAPNRPGVYTLTSTYASWIHHHVAELQPRVVPQTQESQPDGHLCNHHPVFSSAAAPKLLRPVLFLPLGLTLGLLSLWLEH</sequence>
<keyword id="KW-1003">Cell membrane</keyword>
<keyword id="KW-1015">Disulfide bond</keyword>
<keyword id="KW-0325">Glycoprotein</keyword>
<keyword id="KW-0378">Hydrolase</keyword>
<keyword id="KW-0472">Membrane</keyword>
<keyword id="KW-0645">Protease</keyword>
<keyword id="KW-1185">Reference proteome</keyword>
<keyword id="KW-0964">Secreted</keyword>
<keyword id="KW-0720">Serine protease</keyword>
<keyword id="KW-0732">Signal</keyword>
<keyword id="KW-0812">Transmembrane</keyword>
<keyword id="KW-1133">Transmembrane helix</keyword>
<keyword id="KW-0865">Zymogen</keyword>
<reference key="1">
    <citation type="journal article" date="2000" name="J. Am. Soc. Nephrol.">
        <title>Activation of the amiloride-sensitive epithelial sodium channel by the serine protease mCAP1 expressed in a mouse cortical collecting duct cell line.</title>
        <authorList>
            <person name="Vuagniaux G."/>
            <person name="Vallet V."/>
            <person name="Jaeger N.F."/>
            <person name="Pfister C."/>
            <person name="Bens M."/>
            <person name="Farman N."/>
            <person name="Courtois-Coutry N."/>
            <person name="Vandewalle A."/>
            <person name="Rossier B.C."/>
            <person name="Hummler E."/>
        </authorList>
    </citation>
    <scope>NUCLEOTIDE SEQUENCE [MRNA]</scope>
    <scope>FUNCTION</scope>
</reference>
<evidence type="ECO:0000250" key="1"/>
<evidence type="ECO:0000255" key="2"/>
<evidence type="ECO:0000255" key="3">
    <source>
        <dbReference type="PROSITE-ProRule" id="PRU00274"/>
    </source>
</evidence>
<evidence type="ECO:0000269" key="4">
    <source>
    </source>
</evidence>
<evidence type="ECO:0000305" key="5"/>